<name>RL2_HAHCH</name>
<reference key="1">
    <citation type="journal article" date="2005" name="Nucleic Acids Res.">
        <title>Genomic blueprint of Hahella chejuensis, a marine microbe producing an algicidal agent.</title>
        <authorList>
            <person name="Jeong H."/>
            <person name="Yim J.H."/>
            <person name="Lee C."/>
            <person name="Choi S.-H."/>
            <person name="Park Y.K."/>
            <person name="Yoon S.H."/>
            <person name="Hur C.-G."/>
            <person name="Kang H.-Y."/>
            <person name="Kim D."/>
            <person name="Lee H.H."/>
            <person name="Park K.H."/>
            <person name="Park S.-H."/>
            <person name="Park H.-S."/>
            <person name="Lee H.K."/>
            <person name="Oh T.K."/>
            <person name="Kim J.F."/>
        </authorList>
    </citation>
    <scope>NUCLEOTIDE SEQUENCE [LARGE SCALE GENOMIC DNA]</scope>
    <source>
        <strain>KCTC 2396</strain>
    </source>
</reference>
<evidence type="ECO:0000255" key="1">
    <source>
        <dbReference type="HAMAP-Rule" id="MF_01320"/>
    </source>
</evidence>
<evidence type="ECO:0000256" key="2">
    <source>
        <dbReference type="SAM" id="MobiDB-lite"/>
    </source>
</evidence>
<evidence type="ECO:0000305" key="3"/>
<organism>
    <name type="scientific">Hahella chejuensis (strain KCTC 2396)</name>
    <dbReference type="NCBI Taxonomy" id="349521"/>
    <lineage>
        <taxon>Bacteria</taxon>
        <taxon>Pseudomonadati</taxon>
        <taxon>Pseudomonadota</taxon>
        <taxon>Gammaproteobacteria</taxon>
        <taxon>Oceanospirillales</taxon>
        <taxon>Hahellaceae</taxon>
        <taxon>Hahella</taxon>
    </lineage>
</organism>
<accession>Q2S915</accession>
<feature type="chain" id="PRO_0000237193" description="Large ribosomal subunit protein uL2">
    <location>
        <begin position="1"/>
        <end position="274"/>
    </location>
</feature>
<feature type="region of interest" description="Disordered" evidence="2">
    <location>
        <begin position="221"/>
        <end position="256"/>
    </location>
</feature>
<comment type="function">
    <text evidence="1">One of the primary rRNA binding proteins. Required for association of the 30S and 50S subunits to form the 70S ribosome, for tRNA binding and peptide bond formation. It has been suggested to have peptidyltransferase activity; this is somewhat controversial. Makes several contacts with the 16S rRNA in the 70S ribosome.</text>
</comment>
<comment type="subunit">
    <text evidence="1">Part of the 50S ribosomal subunit. Forms a bridge to the 30S subunit in the 70S ribosome.</text>
</comment>
<comment type="similarity">
    <text evidence="1">Belongs to the universal ribosomal protein uL2 family.</text>
</comment>
<gene>
    <name evidence="1" type="primary">rplB</name>
    <name type="ordered locus">HCH_06214</name>
</gene>
<sequence>MPVVKTKPTSPGRRHVVAVTNPSLHKGAPLASLTEKKRKNGGRNNAGRITVRHQGGGHKQLYRVIDFKRTKDGIPAVVERLEYDPNRTAHIALLKYADGERRYIIAPKGVSVGDAIASGQEAPIRVGSCLPLRNIPVGSVVHCIEMKPGKGAQIARSAGASAQVVAREGAYATIRLRSGEMRKVLVECRATLGEVSNSENNLRVYGKAGAKRWRGVRPTVRGTAMNPVDHPHGGGEGRNFGKHPVTPWGVPTKGYKTRKNKRTDKMIVRRRKAK</sequence>
<protein>
    <recommendedName>
        <fullName evidence="1">Large ribosomal subunit protein uL2</fullName>
    </recommendedName>
    <alternativeName>
        <fullName evidence="3">50S ribosomal protein L2</fullName>
    </alternativeName>
</protein>
<keyword id="KW-1185">Reference proteome</keyword>
<keyword id="KW-0687">Ribonucleoprotein</keyword>
<keyword id="KW-0689">Ribosomal protein</keyword>
<keyword id="KW-0694">RNA-binding</keyword>
<keyword id="KW-0699">rRNA-binding</keyword>
<proteinExistence type="inferred from homology"/>
<dbReference type="EMBL" id="CP000155">
    <property type="protein sequence ID" value="ABC32859.1"/>
    <property type="molecule type" value="Genomic_DNA"/>
</dbReference>
<dbReference type="RefSeq" id="WP_011399917.1">
    <property type="nucleotide sequence ID" value="NC_007645.1"/>
</dbReference>
<dbReference type="SMR" id="Q2S915"/>
<dbReference type="STRING" id="349521.HCH_06214"/>
<dbReference type="KEGG" id="hch:HCH_06214"/>
<dbReference type="eggNOG" id="COG0090">
    <property type="taxonomic scope" value="Bacteria"/>
</dbReference>
<dbReference type="HOGENOM" id="CLU_036235_2_1_6"/>
<dbReference type="OrthoDB" id="9778722at2"/>
<dbReference type="Proteomes" id="UP000000238">
    <property type="component" value="Chromosome"/>
</dbReference>
<dbReference type="GO" id="GO:0015934">
    <property type="term" value="C:large ribosomal subunit"/>
    <property type="evidence" value="ECO:0007669"/>
    <property type="project" value="InterPro"/>
</dbReference>
<dbReference type="GO" id="GO:0019843">
    <property type="term" value="F:rRNA binding"/>
    <property type="evidence" value="ECO:0007669"/>
    <property type="project" value="UniProtKB-UniRule"/>
</dbReference>
<dbReference type="GO" id="GO:0003735">
    <property type="term" value="F:structural constituent of ribosome"/>
    <property type="evidence" value="ECO:0007669"/>
    <property type="project" value="InterPro"/>
</dbReference>
<dbReference type="GO" id="GO:0016740">
    <property type="term" value="F:transferase activity"/>
    <property type="evidence" value="ECO:0007669"/>
    <property type="project" value="InterPro"/>
</dbReference>
<dbReference type="GO" id="GO:0002181">
    <property type="term" value="P:cytoplasmic translation"/>
    <property type="evidence" value="ECO:0007669"/>
    <property type="project" value="TreeGrafter"/>
</dbReference>
<dbReference type="FunFam" id="2.30.30.30:FF:000001">
    <property type="entry name" value="50S ribosomal protein L2"/>
    <property type="match status" value="1"/>
</dbReference>
<dbReference type="FunFam" id="2.40.50.140:FF:000003">
    <property type="entry name" value="50S ribosomal protein L2"/>
    <property type="match status" value="1"/>
</dbReference>
<dbReference type="FunFam" id="4.10.950.10:FF:000001">
    <property type="entry name" value="50S ribosomal protein L2"/>
    <property type="match status" value="1"/>
</dbReference>
<dbReference type="Gene3D" id="2.30.30.30">
    <property type="match status" value="1"/>
</dbReference>
<dbReference type="Gene3D" id="2.40.50.140">
    <property type="entry name" value="Nucleic acid-binding proteins"/>
    <property type="match status" value="1"/>
</dbReference>
<dbReference type="Gene3D" id="4.10.950.10">
    <property type="entry name" value="Ribosomal protein L2, domain 3"/>
    <property type="match status" value="1"/>
</dbReference>
<dbReference type="HAMAP" id="MF_01320_B">
    <property type="entry name" value="Ribosomal_uL2_B"/>
    <property type="match status" value="1"/>
</dbReference>
<dbReference type="InterPro" id="IPR012340">
    <property type="entry name" value="NA-bd_OB-fold"/>
</dbReference>
<dbReference type="InterPro" id="IPR014722">
    <property type="entry name" value="Rib_uL2_dom2"/>
</dbReference>
<dbReference type="InterPro" id="IPR002171">
    <property type="entry name" value="Ribosomal_uL2"/>
</dbReference>
<dbReference type="InterPro" id="IPR005880">
    <property type="entry name" value="Ribosomal_uL2_bac/org-type"/>
</dbReference>
<dbReference type="InterPro" id="IPR022669">
    <property type="entry name" value="Ribosomal_uL2_C"/>
</dbReference>
<dbReference type="InterPro" id="IPR022671">
    <property type="entry name" value="Ribosomal_uL2_CS"/>
</dbReference>
<dbReference type="InterPro" id="IPR014726">
    <property type="entry name" value="Ribosomal_uL2_dom3"/>
</dbReference>
<dbReference type="InterPro" id="IPR022666">
    <property type="entry name" value="Ribosomal_uL2_RNA-bd_dom"/>
</dbReference>
<dbReference type="InterPro" id="IPR008991">
    <property type="entry name" value="Translation_prot_SH3-like_sf"/>
</dbReference>
<dbReference type="NCBIfam" id="TIGR01171">
    <property type="entry name" value="rplB_bact"/>
    <property type="match status" value="1"/>
</dbReference>
<dbReference type="PANTHER" id="PTHR13691:SF5">
    <property type="entry name" value="LARGE RIBOSOMAL SUBUNIT PROTEIN UL2M"/>
    <property type="match status" value="1"/>
</dbReference>
<dbReference type="PANTHER" id="PTHR13691">
    <property type="entry name" value="RIBOSOMAL PROTEIN L2"/>
    <property type="match status" value="1"/>
</dbReference>
<dbReference type="Pfam" id="PF00181">
    <property type="entry name" value="Ribosomal_L2"/>
    <property type="match status" value="1"/>
</dbReference>
<dbReference type="Pfam" id="PF03947">
    <property type="entry name" value="Ribosomal_L2_C"/>
    <property type="match status" value="1"/>
</dbReference>
<dbReference type="PIRSF" id="PIRSF002158">
    <property type="entry name" value="Ribosomal_L2"/>
    <property type="match status" value="1"/>
</dbReference>
<dbReference type="SMART" id="SM01383">
    <property type="entry name" value="Ribosomal_L2"/>
    <property type="match status" value="1"/>
</dbReference>
<dbReference type="SMART" id="SM01382">
    <property type="entry name" value="Ribosomal_L2_C"/>
    <property type="match status" value="1"/>
</dbReference>
<dbReference type="SUPFAM" id="SSF50249">
    <property type="entry name" value="Nucleic acid-binding proteins"/>
    <property type="match status" value="1"/>
</dbReference>
<dbReference type="SUPFAM" id="SSF50104">
    <property type="entry name" value="Translation proteins SH3-like domain"/>
    <property type="match status" value="1"/>
</dbReference>
<dbReference type="PROSITE" id="PS00467">
    <property type="entry name" value="RIBOSOMAL_L2"/>
    <property type="match status" value="1"/>
</dbReference>